<dbReference type="EC" id="2.1.1.33" evidence="2"/>
<dbReference type="EMBL" id="AE000513">
    <property type="protein sequence ID" value="AAF11238.1"/>
    <property type="molecule type" value="Genomic_DNA"/>
</dbReference>
<dbReference type="PIR" id="F75365">
    <property type="entry name" value="F75365"/>
</dbReference>
<dbReference type="RefSeq" id="NP_295403.1">
    <property type="nucleotide sequence ID" value="NC_001263.1"/>
</dbReference>
<dbReference type="RefSeq" id="WP_010888315.1">
    <property type="nucleotide sequence ID" value="NC_001263.1"/>
</dbReference>
<dbReference type="SMR" id="Q9RTS6"/>
<dbReference type="STRING" id="243230.DR_1680"/>
<dbReference type="PaxDb" id="243230-DR_1680"/>
<dbReference type="EnsemblBacteria" id="AAF11238">
    <property type="protein sequence ID" value="AAF11238"/>
    <property type="gene ID" value="DR_1680"/>
</dbReference>
<dbReference type="GeneID" id="69517916"/>
<dbReference type="KEGG" id="dra:DR_1680"/>
<dbReference type="PATRIC" id="fig|243230.17.peg.1889"/>
<dbReference type="eggNOG" id="COG0220">
    <property type="taxonomic scope" value="Bacteria"/>
</dbReference>
<dbReference type="HOGENOM" id="CLU_077150_0_0_0"/>
<dbReference type="InParanoid" id="Q9RTS6"/>
<dbReference type="OrthoDB" id="9802090at2"/>
<dbReference type="UniPathway" id="UPA00989"/>
<dbReference type="Proteomes" id="UP000002524">
    <property type="component" value="Chromosome 1"/>
</dbReference>
<dbReference type="GO" id="GO:0043527">
    <property type="term" value="C:tRNA methyltransferase complex"/>
    <property type="evidence" value="ECO:0000318"/>
    <property type="project" value="GO_Central"/>
</dbReference>
<dbReference type="GO" id="GO:0008176">
    <property type="term" value="F:tRNA (guanine(46)-N7)-methyltransferase activity"/>
    <property type="evidence" value="ECO:0000318"/>
    <property type="project" value="GO_Central"/>
</dbReference>
<dbReference type="GO" id="GO:0036265">
    <property type="term" value="P:RNA (guanine-N7)-methylation"/>
    <property type="evidence" value="ECO:0000318"/>
    <property type="project" value="GO_Central"/>
</dbReference>
<dbReference type="GO" id="GO:0030488">
    <property type="term" value="P:tRNA methylation"/>
    <property type="evidence" value="ECO:0000318"/>
    <property type="project" value="GO_Central"/>
</dbReference>
<dbReference type="CDD" id="cd02440">
    <property type="entry name" value="AdoMet_MTases"/>
    <property type="match status" value="1"/>
</dbReference>
<dbReference type="Gene3D" id="3.40.50.150">
    <property type="entry name" value="Vaccinia Virus protein VP39"/>
    <property type="match status" value="1"/>
</dbReference>
<dbReference type="HAMAP" id="MF_01057">
    <property type="entry name" value="tRNA_methyltr_TrmB"/>
    <property type="match status" value="1"/>
</dbReference>
<dbReference type="InterPro" id="IPR029063">
    <property type="entry name" value="SAM-dependent_MTases_sf"/>
</dbReference>
<dbReference type="InterPro" id="IPR003358">
    <property type="entry name" value="tRNA_(Gua-N-7)_MeTrfase_Trmb"/>
</dbReference>
<dbReference type="InterPro" id="IPR055361">
    <property type="entry name" value="tRNA_methyltr_TrmB_bact"/>
</dbReference>
<dbReference type="PANTHER" id="PTHR23417">
    <property type="entry name" value="3-DEOXY-D-MANNO-OCTULOSONIC-ACID TRANSFERASE/TRNA GUANINE-N 7 - -METHYLTRANSFERASE"/>
    <property type="match status" value="1"/>
</dbReference>
<dbReference type="PANTHER" id="PTHR23417:SF14">
    <property type="entry name" value="PENTACOTRIPEPTIDE-REPEAT REGION OF PRORP DOMAIN-CONTAINING PROTEIN"/>
    <property type="match status" value="1"/>
</dbReference>
<dbReference type="Pfam" id="PF02390">
    <property type="entry name" value="Methyltransf_4"/>
    <property type="match status" value="1"/>
</dbReference>
<dbReference type="SUPFAM" id="SSF53335">
    <property type="entry name" value="S-adenosyl-L-methionine-dependent methyltransferases"/>
    <property type="match status" value="1"/>
</dbReference>
<dbReference type="PROSITE" id="PS51625">
    <property type="entry name" value="SAM_MT_TRMB"/>
    <property type="match status" value="1"/>
</dbReference>
<proteinExistence type="inferred from homology"/>
<feature type="chain" id="PRO_0000171325" description="tRNA (guanine-N(7)-)-methyltransferase">
    <location>
        <begin position="1"/>
        <end position="322"/>
    </location>
</feature>
<feature type="active site" evidence="1">
    <location>
        <position position="105"/>
    </location>
</feature>
<feature type="binding site" evidence="2">
    <location>
        <position position="29"/>
    </location>
    <ligand>
        <name>S-adenosyl-L-methionine</name>
        <dbReference type="ChEBI" id="CHEBI:59789"/>
    </ligand>
</feature>
<feature type="binding site" evidence="2">
    <location>
        <position position="55"/>
    </location>
    <ligand>
        <name>S-adenosyl-L-methionine</name>
        <dbReference type="ChEBI" id="CHEBI:59789"/>
    </ligand>
</feature>
<feature type="binding site" evidence="2">
    <location>
        <position position="105"/>
    </location>
    <ligand>
        <name>S-adenosyl-L-methionine</name>
        <dbReference type="ChEBI" id="CHEBI:59789"/>
    </ligand>
</feature>
<feature type="binding site" evidence="2">
    <location>
        <position position="109"/>
    </location>
    <ligand>
        <name>substrate</name>
    </ligand>
</feature>
<feature type="binding site" evidence="2">
    <location>
        <position position="141"/>
    </location>
    <ligand>
        <name>substrate</name>
    </ligand>
</feature>
<comment type="function">
    <text evidence="2">Catalyzes the formation of N(7)-methylguanine at position 46 (m7G46) in tRNA.</text>
</comment>
<comment type="catalytic activity">
    <reaction evidence="2">
        <text>guanosine(46) in tRNA + S-adenosyl-L-methionine = N(7)-methylguanosine(46) in tRNA + S-adenosyl-L-homocysteine</text>
        <dbReference type="Rhea" id="RHEA:42708"/>
        <dbReference type="Rhea" id="RHEA-COMP:10188"/>
        <dbReference type="Rhea" id="RHEA-COMP:10189"/>
        <dbReference type="ChEBI" id="CHEBI:57856"/>
        <dbReference type="ChEBI" id="CHEBI:59789"/>
        <dbReference type="ChEBI" id="CHEBI:74269"/>
        <dbReference type="ChEBI" id="CHEBI:74480"/>
        <dbReference type="EC" id="2.1.1.33"/>
    </reaction>
</comment>
<comment type="pathway">
    <text evidence="2">tRNA modification; N(7)-methylguanine-tRNA biosynthesis.</text>
</comment>
<comment type="similarity">
    <text evidence="2">Belongs to the class I-like SAM-binding methyltransferase superfamily. TrmB family.</text>
</comment>
<protein>
    <recommendedName>
        <fullName evidence="2">tRNA (guanine-N(7)-)-methyltransferase</fullName>
        <ecNumber evidence="2">2.1.1.33</ecNumber>
    </recommendedName>
    <alternativeName>
        <fullName evidence="2">tRNA (guanine(46)-N(7))-methyltransferase</fullName>
    </alternativeName>
    <alternativeName>
        <fullName evidence="2">tRNA(m7G46)-methyltransferase</fullName>
    </alternativeName>
</protein>
<accession>Q9RTS6</accession>
<evidence type="ECO:0000250" key="1"/>
<evidence type="ECO:0000255" key="2">
    <source>
        <dbReference type="HAMAP-Rule" id="MF_01057"/>
    </source>
</evidence>
<gene>
    <name evidence="2" type="primary">trmB</name>
    <name type="ordered locus">DR_1680</name>
</gene>
<organism>
    <name type="scientific">Deinococcus radiodurans (strain ATCC 13939 / DSM 20539 / JCM 16871 / CCUG 27074 / LMG 4051 / NBRC 15346 / NCIMB 9279 / VKM B-1422 / R1)</name>
    <dbReference type="NCBI Taxonomy" id="243230"/>
    <lineage>
        <taxon>Bacteria</taxon>
        <taxon>Thermotogati</taxon>
        <taxon>Deinococcota</taxon>
        <taxon>Deinococci</taxon>
        <taxon>Deinococcales</taxon>
        <taxon>Deinococcaceae</taxon>
        <taxon>Deinococcus</taxon>
    </lineage>
</organism>
<sequence length="322" mass="35470">MIFRLGDFRFPDDPARLYPDTPDRPWVLEIGFGDGRFWPHYARTFPEPPNYLGVEISGVSLLKAHRRLKDAGLTNAVLTKLPAEVLVAQVIPHGSLDAIIVNFPDPWPKAGHEDHRLLRVPFFQVAASRLKPGGAALLTTDHDEYFEFACAQAEASGVMRVERVGPPPAALETKYAQKWRDLGLGVNHARFVPTRHDPVPNGTFAPYSEEDPAVPHAVLTLPADFSPQHFDKLTVRGKTWTVVLLDLYATLRRGGWVALAHVVEGDLTQEVLVGITEREDGTHLVRLAKFGGPIITPGVKAAVGAVTEWLEGQGAVVKHRGY</sequence>
<name>TRMB_DEIRA</name>
<keyword id="KW-0489">Methyltransferase</keyword>
<keyword id="KW-1185">Reference proteome</keyword>
<keyword id="KW-0949">S-adenosyl-L-methionine</keyword>
<keyword id="KW-0808">Transferase</keyword>
<keyword id="KW-0819">tRNA processing</keyword>
<reference key="1">
    <citation type="journal article" date="1999" name="Science">
        <title>Genome sequence of the radioresistant bacterium Deinococcus radiodurans R1.</title>
        <authorList>
            <person name="White O."/>
            <person name="Eisen J.A."/>
            <person name="Heidelberg J.F."/>
            <person name="Hickey E.K."/>
            <person name="Peterson J.D."/>
            <person name="Dodson R.J."/>
            <person name="Haft D.H."/>
            <person name="Gwinn M.L."/>
            <person name="Nelson W.C."/>
            <person name="Richardson D.L."/>
            <person name="Moffat K.S."/>
            <person name="Qin H."/>
            <person name="Jiang L."/>
            <person name="Pamphile W."/>
            <person name="Crosby M."/>
            <person name="Shen M."/>
            <person name="Vamathevan J.J."/>
            <person name="Lam P."/>
            <person name="McDonald L.A."/>
            <person name="Utterback T.R."/>
            <person name="Zalewski C."/>
            <person name="Makarova K.S."/>
            <person name="Aravind L."/>
            <person name="Daly M.J."/>
            <person name="Minton K.W."/>
            <person name="Fleischmann R.D."/>
            <person name="Ketchum K.A."/>
            <person name="Nelson K.E."/>
            <person name="Salzberg S.L."/>
            <person name="Smith H.O."/>
            <person name="Venter J.C."/>
            <person name="Fraser C.M."/>
        </authorList>
    </citation>
    <scope>NUCLEOTIDE SEQUENCE [LARGE SCALE GENOMIC DNA]</scope>
    <source>
        <strain>ATCC 13939 / DSM 20539 / JCM 16871 / CCUG 27074 / LMG 4051 / NBRC 15346 / NCIMB 9279 / VKM B-1422 / R1</strain>
    </source>
</reference>